<comment type="function">
    <text evidence="2">GTPase involved in nucleocytoplasmic transport, participating both to the import and the export from the nucleus of proteins and RNAs. Switches between a cytoplasmic GDP- and a nuclear GTP-bound state by nucleotide exchange and GTP hydrolysis. Nuclear import receptors such as importin beta bind their substrates only in the absence of GTP-bound RAN and release them upon direct interaction with GTP-bound RAN, while export receptors behave in the opposite way. Thereby, RAN controls cargo loading and release by transport receptors in the proper compartment and ensures the directionality of the transport. Interaction with RANBP1 induces a conformation change in the complex formed by XPO1 and RAN that triggers the release of the nuclear export signal of cargo proteins. RAN (GTP-bound form) triggers microtubule assembly at mitotic chromosomes and is required for normal mitotic spindle assembly and chromosome segregation. Required for normal progress through mitosis.</text>
</comment>
<comment type="catalytic activity">
    <reaction evidence="2">
        <text>GTP + H2O = GDP + phosphate + H(+)</text>
        <dbReference type="Rhea" id="RHEA:19669"/>
        <dbReference type="ChEBI" id="CHEBI:15377"/>
        <dbReference type="ChEBI" id="CHEBI:15378"/>
        <dbReference type="ChEBI" id="CHEBI:37565"/>
        <dbReference type="ChEBI" id="CHEBI:43474"/>
        <dbReference type="ChEBI" id="CHEBI:58189"/>
    </reaction>
    <physiologicalReaction direction="left-to-right" evidence="2">
        <dbReference type="Rhea" id="RHEA:19670"/>
    </physiologicalReaction>
</comment>
<comment type="cofactor">
    <cofactor evidence="2">
        <name>Mg(2+)</name>
        <dbReference type="ChEBI" id="CHEBI:18420"/>
    </cofactor>
    <text evidence="2">Mg(2+) interacts primarily with the phosphate groups of the bound guanine nucleotide.</text>
</comment>
<comment type="subunit">
    <text evidence="1 2 3">Monomer. Interacts with rangap1, which promotes ran-mediated GTP hydrolysis. Interacts with kpnb1. Interaction with kpnb1 inhibits rangap1-mediated stimulation of GTPase activity. Interacts with rcc1 which promotes the exchange of ran-bound GDP by GTP. Interaction with kpnb1 inhibits rcc1-mediated exchange of ran-bound GDP by GTP. Interacts (GTP-bound form) with tnpo1; the interaction is direct. Interacts (GTP-bound form) with tnpo3; the interaction is direct. Interacts with kpnb1 and with tnpo1; both inhibit ran GTPase activity. Interacts (via C-terminus) with ranbp1, which alleviates the inhibition of ran GTPase activity. Interacts with rangrf, which promotes the release of bound guanine nucleotide. Rangrf and rcc1 compete for an overlapping binding site on ran. Identified in a complex with kpna2 and cse1l; interaction with ranbp1 mediates dissociation of ran from this complex. Interaction with both ranbp1 and kpna2 promotes dissociation of the complex between ran and kpnb1. Identified in a complex composed of ran, rangap1 and ranbp1. Identified in a complex that contains tnpo1, ran and ranbp1. Identified in a nuclear export complex with xpo1. Interaction with ranbp1 or ranbp2 induces a conformation change in the complex formed by xpo1 and ran that triggers the release of the nuclear export signal of cargo proteins. Component of a nuclear export receptor complex composed of kpnb1, ran, snupn and xpo1 (By similarity).</text>
</comment>
<comment type="subcellular location">
    <subcellularLocation>
        <location evidence="2">Nucleus</location>
    </subcellularLocation>
    <subcellularLocation>
        <location evidence="2">Nucleus envelope</location>
    </subcellularLocation>
    <subcellularLocation>
        <location evidence="2">Cytoplasm</location>
        <location evidence="2">Cytosol</location>
    </subcellularLocation>
    <subcellularLocation>
        <location evidence="2">Cytoplasm</location>
    </subcellularLocation>
    <text evidence="2">Predominantly nuclear during interphase. Becomes dispersed throughout the cytoplasm during mitosis (By similarity).</text>
</comment>
<comment type="similarity">
    <text evidence="4 5">Belongs to the small GTPase superfamily. Ran family.</text>
</comment>
<dbReference type="EC" id="3.6.5.-" evidence="2"/>
<dbReference type="EMBL" id="BC074619">
    <property type="protein sequence ID" value="AAH74619.1"/>
    <property type="molecule type" value="mRNA"/>
</dbReference>
<dbReference type="RefSeq" id="NP_001004829.1">
    <property type="nucleotide sequence ID" value="NM_001004829.1"/>
</dbReference>
<dbReference type="SMR" id="Q6GL85"/>
<dbReference type="FunCoup" id="Q6GL85">
    <property type="interactions" value="3173"/>
</dbReference>
<dbReference type="STRING" id="8364.ENSXETP00000031998"/>
<dbReference type="PaxDb" id="8364-ENSXETP00000049065"/>
<dbReference type="DNASU" id="448091"/>
<dbReference type="GeneID" id="448091"/>
<dbReference type="KEGG" id="xtr:448091"/>
<dbReference type="AGR" id="Xenbase:XB-GENE-489468"/>
<dbReference type="CTD" id="5901"/>
<dbReference type="Xenbase" id="XB-GENE-489468">
    <property type="gene designation" value="ran"/>
</dbReference>
<dbReference type="eggNOG" id="KOG0096">
    <property type="taxonomic scope" value="Eukaryota"/>
</dbReference>
<dbReference type="InParanoid" id="Q6GL85"/>
<dbReference type="OrthoDB" id="48625at2759"/>
<dbReference type="Proteomes" id="UP000008143">
    <property type="component" value="Chromosome 1"/>
</dbReference>
<dbReference type="GO" id="GO:0005829">
    <property type="term" value="C:cytosol"/>
    <property type="evidence" value="ECO:0007669"/>
    <property type="project" value="UniProtKB-SubCell"/>
</dbReference>
<dbReference type="GO" id="GO:0005635">
    <property type="term" value="C:nuclear envelope"/>
    <property type="evidence" value="ECO:0007669"/>
    <property type="project" value="UniProtKB-SubCell"/>
</dbReference>
<dbReference type="GO" id="GO:0005634">
    <property type="term" value="C:nucleus"/>
    <property type="evidence" value="ECO:0000250"/>
    <property type="project" value="UniProtKB"/>
</dbReference>
<dbReference type="GO" id="GO:0005525">
    <property type="term" value="F:GTP binding"/>
    <property type="evidence" value="ECO:0000250"/>
    <property type="project" value="UniProtKB"/>
</dbReference>
<dbReference type="GO" id="GO:0003924">
    <property type="term" value="F:GTPase activity"/>
    <property type="evidence" value="ECO:0000250"/>
    <property type="project" value="UniProtKB"/>
</dbReference>
<dbReference type="GO" id="GO:0000287">
    <property type="term" value="F:magnesium ion binding"/>
    <property type="evidence" value="ECO:0000250"/>
    <property type="project" value="UniProtKB"/>
</dbReference>
<dbReference type="GO" id="GO:0046039">
    <property type="term" value="P:GTP metabolic process"/>
    <property type="evidence" value="ECO:0000250"/>
    <property type="project" value="UniProtKB"/>
</dbReference>
<dbReference type="GO" id="GO:0000070">
    <property type="term" value="P:mitotic sister chromatid segregation"/>
    <property type="evidence" value="ECO:0000250"/>
    <property type="project" value="UniProtKB"/>
</dbReference>
<dbReference type="GO" id="GO:0006606">
    <property type="term" value="P:protein import into nucleus"/>
    <property type="evidence" value="ECO:0000250"/>
    <property type="project" value="UniProtKB"/>
</dbReference>
<dbReference type="GO" id="GO:0061015">
    <property type="term" value="P:snRNA import into nucleus"/>
    <property type="evidence" value="ECO:0000250"/>
    <property type="project" value="UniProtKB"/>
</dbReference>
<dbReference type="CDD" id="cd00877">
    <property type="entry name" value="Ran"/>
    <property type="match status" value="1"/>
</dbReference>
<dbReference type="FunFam" id="3.40.50.300:FF:000131">
    <property type="entry name" value="GTP-binding nuclear protein Ran"/>
    <property type="match status" value="1"/>
</dbReference>
<dbReference type="Gene3D" id="3.40.50.300">
    <property type="entry name" value="P-loop containing nucleotide triphosphate hydrolases"/>
    <property type="match status" value="1"/>
</dbReference>
<dbReference type="InterPro" id="IPR027417">
    <property type="entry name" value="P-loop_NTPase"/>
</dbReference>
<dbReference type="InterPro" id="IPR002041">
    <property type="entry name" value="Ran_GTPase"/>
</dbReference>
<dbReference type="InterPro" id="IPR005225">
    <property type="entry name" value="Small_GTP-bd"/>
</dbReference>
<dbReference type="InterPro" id="IPR001806">
    <property type="entry name" value="Small_GTPase"/>
</dbReference>
<dbReference type="NCBIfam" id="TIGR00231">
    <property type="entry name" value="small_GTP"/>
    <property type="match status" value="1"/>
</dbReference>
<dbReference type="PANTHER" id="PTHR24071:SF0">
    <property type="entry name" value="GTP-BINDING NUCLEAR PROTEIN RAN"/>
    <property type="match status" value="1"/>
</dbReference>
<dbReference type="PANTHER" id="PTHR24071">
    <property type="entry name" value="RAN GTPASE"/>
    <property type="match status" value="1"/>
</dbReference>
<dbReference type="Pfam" id="PF00071">
    <property type="entry name" value="Ras"/>
    <property type="match status" value="1"/>
</dbReference>
<dbReference type="PRINTS" id="PR00627">
    <property type="entry name" value="GTPRANTC4"/>
</dbReference>
<dbReference type="SMART" id="SM00175">
    <property type="entry name" value="RAB"/>
    <property type="match status" value="1"/>
</dbReference>
<dbReference type="SMART" id="SM00176">
    <property type="entry name" value="RAN"/>
    <property type="match status" value="1"/>
</dbReference>
<dbReference type="SMART" id="SM00173">
    <property type="entry name" value="RAS"/>
    <property type="match status" value="1"/>
</dbReference>
<dbReference type="SMART" id="SM00174">
    <property type="entry name" value="RHO"/>
    <property type="match status" value="1"/>
</dbReference>
<dbReference type="SUPFAM" id="SSF52540">
    <property type="entry name" value="P-loop containing nucleoside triphosphate hydrolases"/>
    <property type="match status" value="1"/>
</dbReference>
<dbReference type="PROSITE" id="PS51418">
    <property type="entry name" value="RAN"/>
    <property type="match status" value="1"/>
</dbReference>
<reference key="1">
    <citation type="submission" date="2004-06" db="EMBL/GenBank/DDBJ databases">
        <authorList>
            <consortium name="NIH - Xenopus Gene Collection (XGC) project"/>
        </authorList>
    </citation>
    <scope>NUCLEOTIDE SEQUENCE [LARGE SCALE MRNA]</scope>
    <source>
        <tissue>Embryo</tissue>
    </source>
</reference>
<sequence length="216" mass="24455">MAAQGEPQVQFKLVLVGDGGTGKTTFVKRHLTGEFEKKYVATLGVEVHPLVFHTNRGPIKFNVWDTAGQEKFGGLRDGYYIQAQCAIIMFDVTSRVTYKNVPNWHRDLVRVCENIPIVLCGNKVDIKDRKVKAKSIVFHRKKNLQYYDISAKSNYNFEKPFLWLARKLIGDPNFEFVAMPALAPPEVVMDPALAAQYEQDLQHAQATALPDEDDDL</sequence>
<protein>
    <recommendedName>
        <fullName>GTP-binding nuclear protein Ran</fullName>
        <ecNumber evidence="2">3.6.5.-</ecNumber>
    </recommendedName>
    <alternativeName>
        <fullName>GTPase Ran</fullName>
    </alternativeName>
    <alternativeName>
        <fullName>Ras-like protein TC4</fullName>
    </alternativeName>
    <alternativeName>
        <fullName>Ras-related nuclear protein</fullName>
    </alternativeName>
</protein>
<proteinExistence type="evidence at transcript level"/>
<organism>
    <name type="scientific">Xenopus tropicalis</name>
    <name type="common">Western clawed frog</name>
    <name type="synonym">Silurana tropicalis</name>
    <dbReference type="NCBI Taxonomy" id="8364"/>
    <lineage>
        <taxon>Eukaryota</taxon>
        <taxon>Metazoa</taxon>
        <taxon>Chordata</taxon>
        <taxon>Craniata</taxon>
        <taxon>Vertebrata</taxon>
        <taxon>Euteleostomi</taxon>
        <taxon>Amphibia</taxon>
        <taxon>Batrachia</taxon>
        <taxon>Anura</taxon>
        <taxon>Pipoidea</taxon>
        <taxon>Pipidae</taxon>
        <taxon>Xenopodinae</taxon>
        <taxon>Xenopus</taxon>
        <taxon>Silurana</taxon>
    </lineage>
</organism>
<keyword id="KW-0963">Cytoplasm</keyword>
<keyword id="KW-0217">Developmental protein</keyword>
<keyword id="KW-0342">GTP-binding</keyword>
<keyword id="KW-0378">Hydrolase</keyword>
<keyword id="KW-0460">Magnesium</keyword>
<keyword id="KW-0479">Metal-binding</keyword>
<keyword id="KW-0547">Nucleotide-binding</keyword>
<keyword id="KW-0539">Nucleus</keyword>
<keyword id="KW-0653">Protein transport</keyword>
<keyword id="KW-1185">Reference proteome</keyword>
<keyword id="KW-0813">Transport</keyword>
<gene>
    <name type="primary">ran</name>
</gene>
<name>RAN_XENTR</name>
<accession>Q6GL85</accession>
<feature type="chain" id="PRO_0000208703" description="GTP-binding nuclear protein Ran">
    <location>
        <begin position="1"/>
        <end position="216"/>
    </location>
</feature>
<feature type="domain" description="Small GTPase Ran-type" evidence="4">
    <location>
        <begin position="7"/>
        <end position="171"/>
    </location>
</feature>
<feature type="region of interest" description="Switch-I" evidence="4">
    <location>
        <begin position="37"/>
        <end position="45"/>
    </location>
</feature>
<feature type="region of interest" description="Switch-II" evidence="4">
    <location>
        <begin position="68"/>
        <end position="84"/>
    </location>
</feature>
<feature type="region of interest" description="Interaction with RANBP1" evidence="2">
    <location>
        <begin position="211"/>
        <end position="216"/>
    </location>
</feature>
<feature type="binding site" evidence="1">
    <location>
        <begin position="18"/>
        <end position="25"/>
    </location>
    <ligand>
        <name>GTP</name>
        <dbReference type="ChEBI" id="CHEBI:37565"/>
    </ligand>
</feature>
<feature type="binding site" evidence="1">
    <location>
        <begin position="36"/>
        <end position="42"/>
    </location>
    <ligand>
        <name>GTP</name>
        <dbReference type="ChEBI" id="CHEBI:37565"/>
    </ligand>
</feature>
<feature type="binding site" evidence="1">
    <location>
        <position position="68"/>
    </location>
    <ligand>
        <name>GTP</name>
        <dbReference type="ChEBI" id="CHEBI:37565"/>
    </ligand>
</feature>
<feature type="binding site" evidence="1">
    <location>
        <begin position="122"/>
        <end position="125"/>
    </location>
    <ligand>
        <name>GTP</name>
        <dbReference type="ChEBI" id="CHEBI:37565"/>
    </ligand>
</feature>
<feature type="binding site" evidence="1">
    <location>
        <begin position="150"/>
        <end position="152"/>
    </location>
    <ligand>
        <name>GTP</name>
        <dbReference type="ChEBI" id="CHEBI:37565"/>
    </ligand>
</feature>
<feature type="site" description="Essential for GTP hydrolysis" evidence="2">
    <location>
        <position position="69"/>
    </location>
</feature>
<evidence type="ECO:0000250" key="1">
    <source>
        <dbReference type="UniProtKB" id="P62825"/>
    </source>
</evidence>
<evidence type="ECO:0000250" key="2">
    <source>
        <dbReference type="UniProtKB" id="P62826"/>
    </source>
</evidence>
<evidence type="ECO:0000250" key="3">
    <source>
        <dbReference type="UniProtKB" id="P62827"/>
    </source>
</evidence>
<evidence type="ECO:0000255" key="4">
    <source>
        <dbReference type="PROSITE-ProRule" id="PRU00752"/>
    </source>
</evidence>
<evidence type="ECO:0000305" key="5"/>